<reference key="1">
    <citation type="journal article" date="2003" name="Lancet">
        <title>Sequencing and analysis of the genome of the Whipple's disease bacterium Tropheryma whipplei.</title>
        <authorList>
            <person name="Bentley S.D."/>
            <person name="Maiwald M."/>
            <person name="Murphy L.D."/>
            <person name="Pallen M.J."/>
            <person name="Yeats C.A."/>
            <person name="Dover L.G."/>
            <person name="Norbertczak H.T."/>
            <person name="Besra G.S."/>
            <person name="Quail M.A."/>
            <person name="Harris D.E."/>
            <person name="von Herbay A."/>
            <person name="Goble A."/>
            <person name="Rutter S."/>
            <person name="Squares R."/>
            <person name="Squares S."/>
            <person name="Barrell B.G."/>
            <person name="Parkhill J."/>
            <person name="Relman D.A."/>
        </authorList>
    </citation>
    <scope>NUCLEOTIDE SEQUENCE [LARGE SCALE GENOMIC DNA]</scope>
    <source>
        <strain>TW08/27</strain>
    </source>
</reference>
<feature type="chain" id="PRO_0000180211" description="Acyl carrier protein">
    <location>
        <begin position="1"/>
        <end position="82"/>
    </location>
</feature>
<feature type="domain" description="Carrier" evidence="2">
    <location>
        <begin position="3"/>
        <end position="81"/>
    </location>
</feature>
<feature type="modified residue" description="O-(pantetheine 4'-phosphoryl)serine" evidence="2">
    <location>
        <position position="41"/>
    </location>
</feature>
<evidence type="ECO:0000255" key="1">
    <source>
        <dbReference type="HAMAP-Rule" id="MF_01217"/>
    </source>
</evidence>
<evidence type="ECO:0000255" key="2">
    <source>
        <dbReference type="PROSITE-ProRule" id="PRU00258"/>
    </source>
</evidence>
<protein>
    <recommendedName>
        <fullName evidence="1">Acyl carrier protein</fullName>
        <shortName evidence="1">ACP</shortName>
    </recommendedName>
</protein>
<organism>
    <name type="scientific">Tropheryma whipplei (strain TW08/27)</name>
    <name type="common">Whipple's bacillus</name>
    <dbReference type="NCBI Taxonomy" id="218496"/>
    <lineage>
        <taxon>Bacteria</taxon>
        <taxon>Bacillati</taxon>
        <taxon>Actinomycetota</taxon>
        <taxon>Actinomycetes</taxon>
        <taxon>Micrococcales</taxon>
        <taxon>Tropherymataceae</taxon>
        <taxon>Tropheryma</taxon>
    </lineage>
</organism>
<keyword id="KW-0963">Cytoplasm</keyword>
<keyword id="KW-0275">Fatty acid biosynthesis</keyword>
<keyword id="KW-0276">Fatty acid metabolism</keyword>
<keyword id="KW-0444">Lipid biosynthesis</keyword>
<keyword id="KW-0443">Lipid metabolism</keyword>
<keyword id="KW-0596">Phosphopantetheine</keyword>
<keyword id="KW-0597">Phosphoprotein</keyword>
<accession>Q83NH7</accession>
<dbReference type="EMBL" id="BX251411">
    <property type="protein sequence ID" value="CAD67185.1"/>
    <property type="molecule type" value="Genomic_DNA"/>
</dbReference>
<dbReference type="RefSeq" id="WP_011096465.1">
    <property type="nucleotide sequence ID" value="NC_004551.1"/>
</dbReference>
<dbReference type="SMR" id="Q83NH7"/>
<dbReference type="GeneID" id="67388298"/>
<dbReference type="KEGG" id="tws:TW518"/>
<dbReference type="HOGENOM" id="CLU_108696_5_6_11"/>
<dbReference type="UniPathway" id="UPA00094"/>
<dbReference type="GO" id="GO:0005829">
    <property type="term" value="C:cytosol"/>
    <property type="evidence" value="ECO:0007669"/>
    <property type="project" value="TreeGrafter"/>
</dbReference>
<dbReference type="GO" id="GO:0016020">
    <property type="term" value="C:membrane"/>
    <property type="evidence" value="ECO:0007669"/>
    <property type="project" value="GOC"/>
</dbReference>
<dbReference type="GO" id="GO:0000035">
    <property type="term" value="F:acyl binding"/>
    <property type="evidence" value="ECO:0007669"/>
    <property type="project" value="TreeGrafter"/>
</dbReference>
<dbReference type="GO" id="GO:0000036">
    <property type="term" value="F:acyl carrier activity"/>
    <property type="evidence" value="ECO:0007669"/>
    <property type="project" value="UniProtKB-UniRule"/>
</dbReference>
<dbReference type="GO" id="GO:0009245">
    <property type="term" value="P:lipid A biosynthetic process"/>
    <property type="evidence" value="ECO:0007669"/>
    <property type="project" value="TreeGrafter"/>
</dbReference>
<dbReference type="Gene3D" id="1.10.1200.10">
    <property type="entry name" value="ACP-like"/>
    <property type="match status" value="1"/>
</dbReference>
<dbReference type="HAMAP" id="MF_01217">
    <property type="entry name" value="Acyl_carrier"/>
    <property type="match status" value="1"/>
</dbReference>
<dbReference type="InterPro" id="IPR003231">
    <property type="entry name" value="ACP"/>
</dbReference>
<dbReference type="InterPro" id="IPR036736">
    <property type="entry name" value="ACP-like_sf"/>
</dbReference>
<dbReference type="InterPro" id="IPR009081">
    <property type="entry name" value="PP-bd_ACP"/>
</dbReference>
<dbReference type="NCBIfam" id="NF002147">
    <property type="entry name" value="PRK00982.1-1"/>
    <property type="match status" value="1"/>
</dbReference>
<dbReference type="NCBIfam" id="NF002150">
    <property type="entry name" value="PRK00982.1-4"/>
    <property type="match status" value="1"/>
</dbReference>
<dbReference type="PANTHER" id="PTHR20863">
    <property type="entry name" value="ACYL CARRIER PROTEIN"/>
    <property type="match status" value="1"/>
</dbReference>
<dbReference type="PANTHER" id="PTHR20863:SF76">
    <property type="entry name" value="CARRIER DOMAIN-CONTAINING PROTEIN"/>
    <property type="match status" value="1"/>
</dbReference>
<dbReference type="Pfam" id="PF00550">
    <property type="entry name" value="PP-binding"/>
    <property type="match status" value="1"/>
</dbReference>
<dbReference type="SUPFAM" id="SSF47336">
    <property type="entry name" value="ACP-like"/>
    <property type="match status" value="1"/>
</dbReference>
<dbReference type="PROSITE" id="PS50075">
    <property type="entry name" value="CARRIER"/>
    <property type="match status" value="1"/>
</dbReference>
<name>ACP_TROW8</name>
<proteinExistence type="inferred from homology"/>
<comment type="function">
    <text evidence="1">Carrier of the growing fatty acid chain in fatty acid biosynthesis.</text>
</comment>
<comment type="pathway">
    <text evidence="1">Lipid metabolism; fatty acid biosynthesis.</text>
</comment>
<comment type="subcellular location">
    <subcellularLocation>
        <location evidence="1">Cytoplasm</location>
    </subcellularLocation>
</comment>
<comment type="PTM">
    <text evidence="1">4'-phosphopantetheine is transferred from CoA to a specific serine of apo-ACP by AcpS. This modification is essential for activity because fatty acids are bound in thioester linkage to the sulfhydryl of the prosthetic group.</text>
</comment>
<comment type="similarity">
    <text evidence="1">Belongs to the acyl carrier protein (ACP) family.</text>
</comment>
<gene>
    <name evidence="1" type="primary">acpP</name>
    <name type="ordered locus">TW518</name>
</gene>
<sequence length="82" mass="9022">MSLSREKVLESIAQIVHDETGIDKGSVQLDKAFVDDLDIDSISMMTIVVNAEEKYGIEIPDDKVRELRTVGDAVDFIIAAKA</sequence>